<keyword id="KW-0028">Amino-acid biosynthesis</keyword>
<keyword id="KW-0170">Cobalt</keyword>
<keyword id="KW-0220">Diaminopimelate biosynthesis</keyword>
<keyword id="KW-0378">Hydrolase</keyword>
<keyword id="KW-0457">Lysine biosynthesis</keyword>
<keyword id="KW-0479">Metal-binding</keyword>
<keyword id="KW-0862">Zinc</keyword>
<gene>
    <name evidence="1" type="primary">dapE</name>
    <name type="ordered locus">mma_2072</name>
</gene>
<dbReference type="EC" id="3.5.1.18" evidence="1"/>
<dbReference type="EMBL" id="CP000269">
    <property type="protein sequence ID" value="ABR88540.1"/>
    <property type="molecule type" value="Genomic_DNA"/>
</dbReference>
<dbReference type="RefSeq" id="WP_012079925.1">
    <property type="nucleotide sequence ID" value="NC_009659.1"/>
</dbReference>
<dbReference type="SMR" id="A6SZR5"/>
<dbReference type="STRING" id="375286.mma_2072"/>
<dbReference type="MEROPS" id="M20.010"/>
<dbReference type="KEGG" id="mms:mma_2072"/>
<dbReference type="eggNOG" id="COG0624">
    <property type="taxonomic scope" value="Bacteria"/>
</dbReference>
<dbReference type="HOGENOM" id="CLU_021802_4_0_4"/>
<dbReference type="OrthoDB" id="9809784at2"/>
<dbReference type="UniPathway" id="UPA00034">
    <property type="reaction ID" value="UER00021"/>
</dbReference>
<dbReference type="Proteomes" id="UP000006388">
    <property type="component" value="Chromosome"/>
</dbReference>
<dbReference type="GO" id="GO:0008777">
    <property type="term" value="F:acetylornithine deacetylase activity"/>
    <property type="evidence" value="ECO:0007669"/>
    <property type="project" value="TreeGrafter"/>
</dbReference>
<dbReference type="GO" id="GO:0050897">
    <property type="term" value="F:cobalt ion binding"/>
    <property type="evidence" value="ECO:0007669"/>
    <property type="project" value="UniProtKB-UniRule"/>
</dbReference>
<dbReference type="GO" id="GO:0009014">
    <property type="term" value="F:succinyl-diaminopimelate desuccinylase activity"/>
    <property type="evidence" value="ECO:0007669"/>
    <property type="project" value="UniProtKB-UniRule"/>
</dbReference>
<dbReference type="GO" id="GO:0008270">
    <property type="term" value="F:zinc ion binding"/>
    <property type="evidence" value="ECO:0007669"/>
    <property type="project" value="UniProtKB-UniRule"/>
</dbReference>
<dbReference type="GO" id="GO:0019877">
    <property type="term" value="P:diaminopimelate biosynthetic process"/>
    <property type="evidence" value="ECO:0007669"/>
    <property type="project" value="UniProtKB-UniRule"/>
</dbReference>
<dbReference type="GO" id="GO:0006526">
    <property type="term" value="P:L-arginine biosynthetic process"/>
    <property type="evidence" value="ECO:0007669"/>
    <property type="project" value="TreeGrafter"/>
</dbReference>
<dbReference type="GO" id="GO:0009089">
    <property type="term" value="P:lysine biosynthetic process via diaminopimelate"/>
    <property type="evidence" value="ECO:0007669"/>
    <property type="project" value="UniProtKB-UniRule"/>
</dbReference>
<dbReference type="CDD" id="cd03891">
    <property type="entry name" value="M20_DapE_proteobac"/>
    <property type="match status" value="1"/>
</dbReference>
<dbReference type="FunFam" id="3.30.70.360:FF:000011">
    <property type="entry name" value="Succinyl-diaminopimelate desuccinylase"/>
    <property type="match status" value="1"/>
</dbReference>
<dbReference type="FunFam" id="3.40.630.10:FF:000005">
    <property type="entry name" value="Succinyl-diaminopimelate desuccinylase"/>
    <property type="match status" value="1"/>
</dbReference>
<dbReference type="Gene3D" id="3.40.630.10">
    <property type="entry name" value="Zn peptidases"/>
    <property type="match status" value="2"/>
</dbReference>
<dbReference type="HAMAP" id="MF_01690">
    <property type="entry name" value="DapE"/>
    <property type="match status" value="1"/>
</dbReference>
<dbReference type="InterPro" id="IPR036264">
    <property type="entry name" value="Bact_exopeptidase_dim_dom"/>
</dbReference>
<dbReference type="InterPro" id="IPR005941">
    <property type="entry name" value="DapE_proteobac"/>
</dbReference>
<dbReference type="InterPro" id="IPR002933">
    <property type="entry name" value="Peptidase_M20"/>
</dbReference>
<dbReference type="InterPro" id="IPR011650">
    <property type="entry name" value="Peptidase_M20_dimer"/>
</dbReference>
<dbReference type="InterPro" id="IPR050072">
    <property type="entry name" value="Peptidase_M20A"/>
</dbReference>
<dbReference type="NCBIfam" id="TIGR01246">
    <property type="entry name" value="dapE_proteo"/>
    <property type="match status" value="1"/>
</dbReference>
<dbReference type="NCBIfam" id="NF009557">
    <property type="entry name" value="PRK13009.1"/>
    <property type="match status" value="1"/>
</dbReference>
<dbReference type="PANTHER" id="PTHR43808">
    <property type="entry name" value="ACETYLORNITHINE DEACETYLASE"/>
    <property type="match status" value="1"/>
</dbReference>
<dbReference type="PANTHER" id="PTHR43808:SF31">
    <property type="entry name" value="N-ACETYL-L-CITRULLINE DEACETYLASE"/>
    <property type="match status" value="1"/>
</dbReference>
<dbReference type="Pfam" id="PF07687">
    <property type="entry name" value="M20_dimer"/>
    <property type="match status" value="1"/>
</dbReference>
<dbReference type="Pfam" id="PF01546">
    <property type="entry name" value="Peptidase_M20"/>
    <property type="match status" value="1"/>
</dbReference>
<dbReference type="SUPFAM" id="SSF55031">
    <property type="entry name" value="Bacterial exopeptidase dimerisation domain"/>
    <property type="match status" value="1"/>
</dbReference>
<dbReference type="SUPFAM" id="SSF53187">
    <property type="entry name" value="Zn-dependent exopeptidases"/>
    <property type="match status" value="1"/>
</dbReference>
<proteinExistence type="inferred from homology"/>
<evidence type="ECO:0000255" key="1">
    <source>
        <dbReference type="HAMAP-Rule" id="MF_01690"/>
    </source>
</evidence>
<reference key="1">
    <citation type="journal article" date="2007" name="PLoS Genet.">
        <title>Genome analysis of Minibacterium massiliensis highlights the convergent evolution of water-living bacteria.</title>
        <authorList>
            <person name="Audic S."/>
            <person name="Robert C."/>
            <person name="Campagna B."/>
            <person name="Parinello H."/>
            <person name="Claverie J.-M."/>
            <person name="Raoult D."/>
            <person name="Drancourt M."/>
        </authorList>
    </citation>
    <scope>NUCLEOTIDE SEQUENCE [LARGE SCALE GENOMIC DNA]</scope>
    <source>
        <strain>Marseille</strain>
    </source>
</reference>
<comment type="function">
    <text evidence="1">Catalyzes the hydrolysis of N-succinyl-L,L-diaminopimelic acid (SDAP), forming succinate and LL-2,6-diaminopimelate (DAP), an intermediate involved in the bacterial biosynthesis of lysine and meso-diaminopimelic acid, an essential component of bacterial cell walls.</text>
</comment>
<comment type="catalytic activity">
    <reaction evidence="1">
        <text>N-succinyl-(2S,6S)-2,6-diaminopimelate + H2O = (2S,6S)-2,6-diaminopimelate + succinate</text>
        <dbReference type="Rhea" id="RHEA:22608"/>
        <dbReference type="ChEBI" id="CHEBI:15377"/>
        <dbReference type="ChEBI" id="CHEBI:30031"/>
        <dbReference type="ChEBI" id="CHEBI:57609"/>
        <dbReference type="ChEBI" id="CHEBI:58087"/>
        <dbReference type="EC" id="3.5.1.18"/>
    </reaction>
</comment>
<comment type="cofactor">
    <cofactor evidence="1">
        <name>Zn(2+)</name>
        <dbReference type="ChEBI" id="CHEBI:29105"/>
    </cofactor>
    <cofactor evidence="1">
        <name>Co(2+)</name>
        <dbReference type="ChEBI" id="CHEBI:48828"/>
    </cofactor>
    <text evidence="1">Binds 2 Zn(2+) or Co(2+) ions per subunit.</text>
</comment>
<comment type="pathway">
    <text evidence="1">Amino-acid biosynthesis; L-lysine biosynthesis via DAP pathway; LL-2,6-diaminopimelate from (S)-tetrahydrodipicolinate (succinylase route): step 3/3.</text>
</comment>
<comment type="subunit">
    <text evidence="1">Homodimer.</text>
</comment>
<comment type="similarity">
    <text evidence="1">Belongs to the peptidase M20A family. DapE subfamily.</text>
</comment>
<organism>
    <name type="scientific">Janthinobacterium sp. (strain Marseille)</name>
    <name type="common">Minibacterium massiliensis</name>
    <dbReference type="NCBI Taxonomy" id="375286"/>
    <lineage>
        <taxon>Bacteria</taxon>
        <taxon>Pseudomonadati</taxon>
        <taxon>Pseudomonadota</taxon>
        <taxon>Betaproteobacteria</taxon>
        <taxon>Burkholderiales</taxon>
        <taxon>Oxalobacteraceae</taxon>
        <taxon>Janthinobacterium</taxon>
    </lineage>
</organism>
<name>DAPE_JANMA</name>
<accession>A6SZR5</accession>
<feature type="chain" id="PRO_0000375595" description="Succinyl-diaminopimelate desuccinylase">
    <location>
        <begin position="1"/>
        <end position="375"/>
    </location>
</feature>
<feature type="active site" evidence="1">
    <location>
        <position position="68"/>
    </location>
</feature>
<feature type="active site" description="Proton acceptor" evidence="1">
    <location>
        <position position="133"/>
    </location>
</feature>
<feature type="binding site" evidence="1">
    <location>
        <position position="66"/>
    </location>
    <ligand>
        <name>Zn(2+)</name>
        <dbReference type="ChEBI" id="CHEBI:29105"/>
        <label>1</label>
    </ligand>
</feature>
<feature type="binding site" evidence="1">
    <location>
        <position position="99"/>
    </location>
    <ligand>
        <name>Zn(2+)</name>
        <dbReference type="ChEBI" id="CHEBI:29105"/>
        <label>1</label>
    </ligand>
</feature>
<feature type="binding site" evidence="1">
    <location>
        <position position="99"/>
    </location>
    <ligand>
        <name>Zn(2+)</name>
        <dbReference type="ChEBI" id="CHEBI:29105"/>
        <label>2</label>
    </ligand>
</feature>
<feature type="binding site" evidence="1">
    <location>
        <position position="134"/>
    </location>
    <ligand>
        <name>Zn(2+)</name>
        <dbReference type="ChEBI" id="CHEBI:29105"/>
        <label>2</label>
    </ligand>
</feature>
<feature type="binding site" evidence="1">
    <location>
        <position position="162"/>
    </location>
    <ligand>
        <name>Zn(2+)</name>
        <dbReference type="ChEBI" id="CHEBI:29105"/>
        <label>1</label>
    </ligand>
</feature>
<feature type="binding site" evidence="1">
    <location>
        <position position="348"/>
    </location>
    <ligand>
        <name>Zn(2+)</name>
        <dbReference type="ChEBI" id="CHEBI:29105"/>
        <label>2</label>
    </ligand>
</feature>
<sequence>MSKTLALTEELIALSSVTPEDKGCQSRLIELLEPLGFVCETIESDGVTNLWARKGTTQPLLVFAGHTDVVPTGPLEQWTSPPFVPTQREGKLYGRGAADMKTSIAAMVVAAEEFVQAHPAHKGSIGFLITSDEEGPATDGTVIVCNALKARGEQLDYCVVGEPTSSDVLGDTIKNGRRGSMSGKLTVKGIQGHIAYPQLARNPIHQCAPALAELVAEKWDDGNEYYLPTSWQVSNIHGGAGASNVIPGNVVIDFNFRFCTASTVDGLQKRVHAILDKHGLEYDLKWSISGHPFLTPKGTLSDAMSDAIKSETGVTTELSTTGGTSDGRFIAQICPQVVEFGPPNGSIHKIDEHIEVRFIDPLKNIYRRTMENLLL</sequence>
<protein>
    <recommendedName>
        <fullName evidence="1">Succinyl-diaminopimelate desuccinylase</fullName>
        <shortName evidence="1">SDAP desuccinylase</shortName>
        <ecNumber evidence="1">3.5.1.18</ecNumber>
    </recommendedName>
    <alternativeName>
        <fullName evidence="1">N-succinyl-LL-2,6-diaminoheptanedioate amidohydrolase</fullName>
    </alternativeName>
</protein>